<protein>
    <recommendedName>
        <fullName>Uncharacterized protein sll0514</fullName>
    </recommendedName>
</protein>
<sequence length="554" mass="62410">MTFSVPTQGKAFANISFLPYGVGPRDGGICLELHLGPYRILLDCGLEDLTPLLAADPGTVDLVFCSHAHRDHGLGLWQFHQQFPHIPILASEVTQRLLPLNWPDEFVPPFCRVLPWRSPQEVLPGLTVELLPAGHLPGAALILLEYHNGDRLYRVIYTGDYCLSHLQLVDGLALTPLRGLKPDVLILEGHYGNRRLPHRRQQEKQFIQAIETVLAKGRNILLPVPPLGLAQEILKLLRTHHQFTGRQVNLWAGESVARGCDAYQGIIDHLPDNVRNFAQHQPLFWDDKVYPHLRPLTDDQGELSLSAPSIVITTTWPAFWPSPAALPGLWTVFMPQLLTLPSCLVNFAWQDLEEFPKYELEDYLLADHSDGRNTTQLIHNLRPQHLVFVHGQPSDIEDLTSLEELQSRYQLHSPAAGNAVALPIGDRFVQPTPPPPQIYEGEIHELEPNKQIHHLGEVVIHLDGQILENSRWGKFGETGIVQARWQGEELVLRGISQRELLKQNQSSKRPVDFDCCANCRHFQHYHCRNPVSPLMGLEVRADGHCPVFESVASS</sequence>
<evidence type="ECO:0000305" key="1"/>
<proteinExistence type="predicted"/>
<accession>Q55470</accession>
<dbReference type="EMBL" id="BA000022">
    <property type="protein sequence ID" value="BAA10816.1"/>
    <property type="molecule type" value="Genomic_DNA"/>
</dbReference>
<dbReference type="PIR" id="S75969">
    <property type="entry name" value="S75969"/>
</dbReference>
<dbReference type="SMR" id="Q55470"/>
<dbReference type="STRING" id="1148.gene:10500320"/>
<dbReference type="PaxDb" id="1148-1001329"/>
<dbReference type="EnsemblBacteria" id="BAA10816">
    <property type="protein sequence ID" value="BAA10816"/>
    <property type="gene ID" value="BAA10816"/>
</dbReference>
<dbReference type="KEGG" id="syn:sll0514"/>
<dbReference type="eggNOG" id="COG1236">
    <property type="taxonomic scope" value="Bacteria"/>
</dbReference>
<dbReference type="InParanoid" id="Q55470"/>
<dbReference type="PhylomeDB" id="Q55470"/>
<dbReference type="Proteomes" id="UP000001425">
    <property type="component" value="Chromosome"/>
</dbReference>
<dbReference type="GO" id="GO:0004521">
    <property type="term" value="F:RNA endonuclease activity"/>
    <property type="evidence" value="ECO:0000318"/>
    <property type="project" value="GO_Central"/>
</dbReference>
<dbReference type="Gene3D" id="3.60.15.10">
    <property type="entry name" value="Ribonuclease Z/Hydroxyacylglutathione hydrolase-like"/>
    <property type="match status" value="1"/>
</dbReference>
<dbReference type="InterPro" id="IPR050698">
    <property type="entry name" value="MBL"/>
</dbReference>
<dbReference type="InterPro" id="IPR001279">
    <property type="entry name" value="Metallo-B-lactamas"/>
</dbReference>
<dbReference type="InterPro" id="IPR036866">
    <property type="entry name" value="RibonucZ/Hydroxyglut_hydro"/>
</dbReference>
<dbReference type="PANTHER" id="PTHR11203">
    <property type="entry name" value="CLEAVAGE AND POLYADENYLATION SPECIFICITY FACTOR FAMILY MEMBER"/>
    <property type="match status" value="1"/>
</dbReference>
<dbReference type="PANTHER" id="PTHR11203:SF37">
    <property type="entry name" value="INTEGRATOR COMPLEX SUBUNIT 11"/>
    <property type="match status" value="1"/>
</dbReference>
<dbReference type="Pfam" id="PF12706">
    <property type="entry name" value="Lactamase_B_2"/>
    <property type="match status" value="1"/>
</dbReference>
<dbReference type="SMART" id="SM00849">
    <property type="entry name" value="Lactamase_B"/>
    <property type="match status" value="1"/>
</dbReference>
<dbReference type="SUPFAM" id="SSF56281">
    <property type="entry name" value="Metallo-hydrolase/oxidoreductase"/>
    <property type="match status" value="1"/>
</dbReference>
<gene>
    <name type="ordered locus">sll0514</name>
</gene>
<name>Y514_SYNY3</name>
<feature type="chain" id="PRO_0000157873" description="Uncharacterized protein sll0514">
    <location>
        <begin position="1"/>
        <end position="554"/>
    </location>
</feature>
<organism>
    <name type="scientific">Synechocystis sp. (strain ATCC 27184 / PCC 6803 / Kazusa)</name>
    <dbReference type="NCBI Taxonomy" id="1111708"/>
    <lineage>
        <taxon>Bacteria</taxon>
        <taxon>Bacillati</taxon>
        <taxon>Cyanobacteriota</taxon>
        <taxon>Cyanophyceae</taxon>
        <taxon>Synechococcales</taxon>
        <taxon>Merismopediaceae</taxon>
        <taxon>Synechocystis</taxon>
    </lineage>
</organism>
<keyword id="KW-1185">Reference proteome</keyword>
<reference key="1">
    <citation type="journal article" date="1995" name="DNA Res.">
        <title>Sequence analysis of the genome of the unicellular cyanobacterium Synechocystis sp. strain PCC6803. I. Sequence features in the 1 Mb region from map positions 64% to 92% of the genome.</title>
        <authorList>
            <person name="Kaneko T."/>
            <person name="Tanaka A."/>
            <person name="Sato S."/>
            <person name="Kotani H."/>
            <person name="Sazuka T."/>
            <person name="Miyajima N."/>
            <person name="Sugiura M."/>
            <person name="Tabata S."/>
        </authorList>
    </citation>
    <scope>NUCLEOTIDE SEQUENCE [LARGE SCALE GENOMIC DNA]</scope>
    <source>
        <strain>ATCC 27184 / PCC 6803 / N-1</strain>
    </source>
</reference>
<reference key="2">
    <citation type="journal article" date="1996" name="DNA Res.">
        <title>Sequence analysis of the genome of the unicellular cyanobacterium Synechocystis sp. strain PCC6803. II. Sequence determination of the entire genome and assignment of potential protein-coding regions.</title>
        <authorList>
            <person name="Kaneko T."/>
            <person name="Sato S."/>
            <person name="Kotani H."/>
            <person name="Tanaka A."/>
            <person name="Asamizu E."/>
            <person name="Nakamura Y."/>
            <person name="Miyajima N."/>
            <person name="Hirosawa M."/>
            <person name="Sugiura M."/>
            <person name="Sasamoto S."/>
            <person name="Kimura T."/>
            <person name="Hosouchi T."/>
            <person name="Matsuno A."/>
            <person name="Muraki A."/>
            <person name="Nakazaki N."/>
            <person name="Naruo K."/>
            <person name="Okumura S."/>
            <person name="Shimpo S."/>
            <person name="Takeuchi C."/>
            <person name="Wada T."/>
            <person name="Watanabe A."/>
            <person name="Yamada M."/>
            <person name="Yasuda M."/>
            <person name="Tabata S."/>
        </authorList>
    </citation>
    <scope>NUCLEOTIDE SEQUENCE [LARGE SCALE GENOMIC DNA]</scope>
    <source>
        <strain>ATCC 27184 / PCC 6803 / Kazusa</strain>
    </source>
</reference>
<comment type="similarity">
    <text evidence="1">To M.jannaschii MJ0047, MJ0162 and MJ1236.</text>
</comment>